<proteinExistence type="inferred from homology"/>
<accession>Q57ME6</accession>
<keyword id="KW-0342">GTP-binding</keyword>
<keyword id="KW-0378">Hydrolase</keyword>
<keyword id="KW-0479">Metal-binding</keyword>
<keyword id="KW-0547">Nucleotide-binding</keyword>
<keyword id="KW-0554">One-carbon metabolism</keyword>
<keyword id="KW-0862">Zinc</keyword>
<gene>
    <name evidence="2" type="primary">folE</name>
    <name type="ordered locus">SCH_2209</name>
</gene>
<evidence type="ECO:0000250" key="1"/>
<evidence type="ECO:0000255" key="2">
    <source>
        <dbReference type="HAMAP-Rule" id="MF_00223"/>
    </source>
</evidence>
<feature type="chain" id="PRO_1000043726" description="GTP cyclohydrolase 1">
    <location>
        <begin position="1"/>
        <end position="222"/>
    </location>
</feature>
<feature type="binding site" evidence="2">
    <location>
        <position position="111"/>
    </location>
    <ligand>
        <name>Zn(2+)</name>
        <dbReference type="ChEBI" id="CHEBI:29105"/>
    </ligand>
</feature>
<feature type="binding site" evidence="2">
    <location>
        <position position="114"/>
    </location>
    <ligand>
        <name>Zn(2+)</name>
        <dbReference type="ChEBI" id="CHEBI:29105"/>
    </ligand>
</feature>
<feature type="binding site" evidence="2">
    <location>
        <position position="182"/>
    </location>
    <ligand>
        <name>Zn(2+)</name>
        <dbReference type="ChEBI" id="CHEBI:29105"/>
    </ligand>
</feature>
<comment type="catalytic activity">
    <reaction evidence="2">
        <text>GTP + H2O = 7,8-dihydroneopterin 3'-triphosphate + formate + H(+)</text>
        <dbReference type="Rhea" id="RHEA:17473"/>
        <dbReference type="ChEBI" id="CHEBI:15377"/>
        <dbReference type="ChEBI" id="CHEBI:15378"/>
        <dbReference type="ChEBI" id="CHEBI:15740"/>
        <dbReference type="ChEBI" id="CHEBI:37565"/>
        <dbReference type="ChEBI" id="CHEBI:58462"/>
        <dbReference type="EC" id="3.5.4.16"/>
    </reaction>
</comment>
<comment type="pathway">
    <text evidence="2">Cofactor biosynthesis; 7,8-dihydroneopterin triphosphate biosynthesis; 7,8-dihydroneopterin triphosphate from GTP: step 1/1.</text>
</comment>
<comment type="subunit">
    <text evidence="1">Toroid-shaped homodecamer, composed of two pentamers of five dimers.</text>
</comment>
<comment type="similarity">
    <text evidence="2">Belongs to the GTP cyclohydrolase I family.</text>
</comment>
<sequence length="222" mass="24799">MPSLSKEAALVHDALVARGLETPLRPPMDELDNETRKSLIAGHMTEIMQLLNLDLSDDSLMETPHRIAKMYVDEIFAGLDYANFPKITLIENKMKVDEMVTVRDITLTSTCEHHFVTIDGKATVAYIPKDSVIGLSKINRIVQFFAQRPQVQERLTQQILTVLQTLLGTNNVAVSIDAVHYCVKARGIRDATSATTTTSLGGLFKSSQNTRQEFLRAVRHHP</sequence>
<reference key="1">
    <citation type="journal article" date="2005" name="Nucleic Acids Res.">
        <title>The genome sequence of Salmonella enterica serovar Choleraesuis, a highly invasive and resistant zoonotic pathogen.</title>
        <authorList>
            <person name="Chiu C.-H."/>
            <person name="Tang P."/>
            <person name="Chu C."/>
            <person name="Hu S."/>
            <person name="Bao Q."/>
            <person name="Yu J."/>
            <person name="Chou Y.-Y."/>
            <person name="Wang H.-S."/>
            <person name="Lee Y.-S."/>
        </authorList>
    </citation>
    <scope>NUCLEOTIDE SEQUENCE [LARGE SCALE GENOMIC DNA]</scope>
    <source>
        <strain>SC-B67</strain>
    </source>
</reference>
<organism>
    <name type="scientific">Salmonella choleraesuis (strain SC-B67)</name>
    <dbReference type="NCBI Taxonomy" id="321314"/>
    <lineage>
        <taxon>Bacteria</taxon>
        <taxon>Pseudomonadati</taxon>
        <taxon>Pseudomonadota</taxon>
        <taxon>Gammaproteobacteria</taxon>
        <taxon>Enterobacterales</taxon>
        <taxon>Enterobacteriaceae</taxon>
        <taxon>Salmonella</taxon>
    </lineage>
</organism>
<name>GCH1_SALCH</name>
<dbReference type="EC" id="3.5.4.16" evidence="2"/>
<dbReference type="EMBL" id="AE017220">
    <property type="protein sequence ID" value="AAX66115.1"/>
    <property type="molecule type" value="Genomic_DNA"/>
</dbReference>
<dbReference type="RefSeq" id="WP_001540445.1">
    <property type="nucleotide sequence ID" value="NC_006905.1"/>
</dbReference>
<dbReference type="SMR" id="Q57ME6"/>
<dbReference type="KEGG" id="sec:SCH_2209"/>
<dbReference type="HOGENOM" id="CLU_049768_3_2_6"/>
<dbReference type="UniPathway" id="UPA00848">
    <property type="reaction ID" value="UER00151"/>
</dbReference>
<dbReference type="Proteomes" id="UP000000538">
    <property type="component" value="Chromosome"/>
</dbReference>
<dbReference type="GO" id="GO:0005737">
    <property type="term" value="C:cytoplasm"/>
    <property type="evidence" value="ECO:0007669"/>
    <property type="project" value="TreeGrafter"/>
</dbReference>
<dbReference type="GO" id="GO:0005525">
    <property type="term" value="F:GTP binding"/>
    <property type="evidence" value="ECO:0007669"/>
    <property type="project" value="UniProtKB-KW"/>
</dbReference>
<dbReference type="GO" id="GO:0003934">
    <property type="term" value="F:GTP cyclohydrolase I activity"/>
    <property type="evidence" value="ECO:0007669"/>
    <property type="project" value="UniProtKB-UniRule"/>
</dbReference>
<dbReference type="GO" id="GO:0008270">
    <property type="term" value="F:zinc ion binding"/>
    <property type="evidence" value="ECO:0007669"/>
    <property type="project" value="UniProtKB-UniRule"/>
</dbReference>
<dbReference type="GO" id="GO:0006730">
    <property type="term" value="P:one-carbon metabolic process"/>
    <property type="evidence" value="ECO:0007669"/>
    <property type="project" value="UniProtKB-UniRule"/>
</dbReference>
<dbReference type="GO" id="GO:0006729">
    <property type="term" value="P:tetrahydrobiopterin biosynthetic process"/>
    <property type="evidence" value="ECO:0007669"/>
    <property type="project" value="TreeGrafter"/>
</dbReference>
<dbReference type="GO" id="GO:0046654">
    <property type="term" value="P:tetrahydrofolate biosynthetic process"/>
    <property type="evidence" value="ECO:0007669"/>
    <property type="project" value="UniProtKB-UniRule"/>
</dbReference>
<dbReference type="FunFam" id="1.10.286.10:FF:000002">
    <property type="entry name" value="GTP cyclohydrolase 1"/>
    <property type="match status" value="1"/>
</dbReference>
<dbReference type="FunFam" id="3.30.1130.10:FF:000001">
    <property type="entry name" value="GTP cyclohydrolase 1"/>
    <property type="match status" value="1"/>
</dbReference>
<dbReference type="Gene3D" id="1.10.286.10">
    <property type="match status" value="1"/>
</dbReference>
<dbReference type="Gene3D" id="3.30.1130.10">
    <property type="match status" value="1"/>
</dbReference>
<dbReference type="HAMAP" id="MF_00223">
    <property type="entry name" value="FolE"/>
    <property type="match status" value="1"/>
</dbReference>
<dbReference type="InterPro" id="IPR043133">
    <property type="entry name" value="GTP-CH-I_C/QueF"/>
</dbReference>
<dbReference type="InterPro" id="IPR043134">
    <property type="entry name" value="GTP-CH-I_N"/>
</dbReference>
<dbReference type="InterPro" id="IPR001474">
    <property type="entry name" value="GTP_CycHdrlase_I"/>
</dbReference>
<dbReference type="InterPro" id="IPR018234">
    <property type="entry name" value="GTP_CycHdrlase_I_CS"/>
</dbReference>
<dbReference type="InterPro" id="IPR020602">
    <property type="entry name" value="GTP_CycHdrlase_I_dom"/>
</dbReference>
<dbReference type="NCBIfam" id="TIGR00063">
    <property type="entry name" value="folE"/>
    <property type="match status" value="1"/>
</dbReference>
<dbReference type="NCBIfam" id="NF006824">
    <property type="entry name" value="PRK09347.1-1"/>
    <property type="match status" value="1"/>
</dbReference>
<dbReference type="NCBIfam" id="NF006826">
    <property type="entry name" value="PRK09347.1-3"/>
    <property type="match status" value="1"/>
</dbReference>
<dbReference type="PANTHER" id="PTHR11109:SF7">
    <property type="entry name" value="GTP CYCLOHYDROLASE 1"/>
    <property type="match status" value="1"/>
</dbReference>
<dbReference type="PANTHER" id="PTHR11109">
    <property type="entry name" value="GTP CYCLOHYDROLASE I"/>
    <property type="match status" value="1"/>
</dbReference>
<dbReference type="Pfam" id="PF01227">
    <property type="entry name" value="GTP_cyclohydroI"/>
    <property type="match status" value="1"/>
</dbReference>
<dbReference type="SUPFAM" id="SSF55620">
    <property type="entry name" value="Tetrahydrobiopterin biosynthesis enzymes-like"/>
    <property type="match status" value="1"/>
</dbReference>
<dbReference type="PROSITE" id="PS00859">
    <property type="entry name" value="GTP_CYCLOHYDROL_1_1"/>
    <property type="match status" value="1"/>
</dbReference>
<dbReference type="PROSITE" id="PS00860">
    <property type="entry name" value="GTP_CYCLOHYDROL_1_2"/>
    <property type="match status" value="1"/>
</dbReference>
<protein>
    <recommendedName>
        <fullName evidence="2">GTP cyclohydrolase 1</fullName>
        <ecNumber evidence="2">3.5.4.16</ecNumber>
    </recommendedName>
    <alternativeName>
        <fullName evidence="2">GTP cyclohydrolase I</fullName>
        <shortName evidence="2">GTP-CH-I</shortName>
    </alternativeName>
</protein>